<comment type="function">
    <text evidence="1">Catalyzes the ATP-dependent phosphorylation of N-acetyl-L-glutamate.</text>
</comment>
<comment type="catalytic activity">
    <reaction evidence="1">
        <text>N-acetyl-L-glutamate + ATP = N-acetyl-L-glutamyl 5-phosphate + ADP</text>
        <dbReference type="Rhea" id="RHEA:14629"/>
        <dbReference type="ChEBI" id="CHEBI:30616"/>
        <dbReference type="ChEBI" id="CHEBI:44337"/>
        <dbReference type="ChEBI" id="CHEBI:57936"/>
        <dbReference type="ChEBI" id="CHEBI:456216"/>
        <dbReference type="EC" id="2.7.2.8"/>
    </reaction>
</comment>
<comment type="pathway">
    <text evidence="1">Amino-acid biosynthesis; L-arginine biosynthesis; N(2)-acetyl-L-ornithine from L-glutamate: step 2/4.</text>
</comment>
<comment type="subcellular location">
    <subcellularLocation>
        <location evidence="1">Cytoplasm</location>
    </subcellularLocation>
</comment>
<comment type="similarity">
    <text evidence="1">Belongs to the acetylglutamate kinase family. ArgB subfamily.</text>
</comment>
<sequence length="295" mass="31256">MTDISPLDQARILSEALPHMQQYDEETIVIKYGGHAMGDEETAKNFARDIVLLEQTAINPVVVHGGGPQIATMLKRLGIQSEFAAGLRITDAATIEIVEMVLAGSVNKQIVGYINEAGGKAVGLSGKDANMVKASKTTRTIVDPGSNIEKAIDLGFVGDPEKVDLTLLNQLIGYELIPVLAPLATSKEGQTLNVNADTFAGAVAGALKAKRLLLLTDVPGVLDKSKKLIPQLSVKDARKLIADGTISGGMIPKVETCIYALEQGVEGVVIIDGKMQHAVLLELFTNQGTGTLIHK</sequence>
<organism>
    <name type="scientific">Bradyrhizobium diazoefficiens (strain JCM 10833 / BCRC 13528 / IAM 13628 / NBRC 14792 / USDA 110)</name>
    <dbReference type="NCBI Taxonomy" id="224911"/>
    <lineage>
        <taxon>Bacteria</taxon>
        <taxon>Pseudomonadati</taxon>
        <taxon>Pseudomonadota</taxon>
        <taxon>Alphaproteobacteria</taxon>
        <taxon>Hyphomicrobiales</taxon>
        <taxon>Nitrobacteraceae</taxon>
        <taxon>Bradyrhizobium</taxon>
    </lineage>
</organism>
<proteinExistence type="inferred from homology"/>
<gene>
    <name evidence="1" type="primary">argB</name>
    <name type="ordered locus">blr8101</name>
</gene>
<name>ARGB_BRADU</name>
<keyword id="KW-0028">Amino-acid biosynthesis</keyword>
<keyword id="KW-0055">Arginine biosynthesis</keyword>
<keyword id="KW-0067">ATP-binding</keyword>
<keyword id="KW-0963">Cytoplasm</keyword>
<keyword id="KW-0418">Kinase</keyword>
<keyword id="KW-0547">Nucleotide-binding</keyword>
<keyword id="KW-1185">Reference proteome</keyword>
<keyword id="KW-0808">Transferase</keyword>
<feature type="chain" id="PRO_0000112595" description="Acetylglutamate kinase">
    <location>
        <begin position="1"/>
        <end position="295"/>
    </location>
</feature>
<feature type="binding site" evidence="1">
    <location>
        <begin position="66"/>
        <end position="67"/>
    </location>
    <ligand>
        <name>substrate</name>
    </ligand>
</feature>
<feature type="binding site" evidence="1">
    <location>
        <position position="88"/>
    </location>
    <ligand>
        <name>substrate</name>
    </ligand>
</feature>
<feature type="binding site" evidence="1">
    <location>
        <position position="193"/>
    </location>
    <ligand>
        <name>substrate</name>
    </ligand>
</feature>
<feature type="site" description="Transition state stabilizer" evidence="1">
    <location>
        <position position="31"/>
    </location>
</feature>
<feature type="site" description="Transition state stabilizer" evidence="1">
    <location>
        <position position="253"/>
    </location>
</feature>
<protein>
    <recommendedName>
        <fullName evidence="1">Acetylglutamate kinase</fullName>
        <ecNumber evidence="1">2.7.2.8</ecNumber>
    </recommendedName>
    <alternativeName>
        <fullName evidence="1">N-acetyl-L-glutamate 5-phosphotransferase</fullName>
    </alternativeName>
    <alternativeName>
        <fullName evidence="1">NAG kinase</fullName>
        <shortName evidence="1">NAGK</shortName>
    </alternativeName>
</protein>
<evidence type="ECO:0000255" key="1">
    <source>
        <dbReference type="HAMAP-Rule" id="MF_00082"/>
    </source>
</evidence>
<dbReference type="EC" id="2.7.2.8" evidence="1"/>
<dbReference type="EMBL" id="BA000040">
    <property type="protein sequence ID" value="BAC53366.1"/>
    <property type="molecule type" value="Genomic_DNA"/>
</dbReference>
<dbReference type="RefSeq" id="NP_774741.1">
    <property type="nucleotide sequence ID" value="NC_004463.1"/>
</dbReference>
<dbReference type="RefSeq" id="WP_011090823.1">
    <property type="nucleotide sequence ID" value="NZ_CP011360.1"/>
</dbReference>
<dbReference type="SMR" id="Q89BP7"/>
<dbReference type="FunCoup" id="Q89BP7">
    <property type="interactions" value="376"/>
</dbReference>
<dbReference type="STRING" id="224911.AAV28_38200"/>
<dbReference type="EnsemblBacteria" id="BAC53366">
    <property type="protein sequence ID" value="BAC53366"/>
    <property type="gene ID" value="BAC53366"/>
</dbReference>
<dbReference type="GeneID" id="64073729"/>
<dbReference type="KEGG" id="bja:blr8101"/>
<dbReference type="PATRIC" id="fig|224911.44.peg.8271"/>
<dbReference type="eggNOG" id="COG0548">
    <property type="taxonomic scope" value="Bacteria"/>
</dbReference>
<dbReference type="HOGENOM" id="CLU_053680_0_0_5"/>
<dbReference type="InParanoid" id="Q89BP7"/>
<dbReference type="OrthoDB" id="9803155at2"/>
<dbReference type="PhylomeDB" id="Q89BP7"/>
<dbReference type="UniPathway" id="UPA00068">
    <property type="reaction ID" value="UER00107"/>
</dbReference>
<dbReference type="Proteomes" id="UP000002526">
    <property type="component" value="Chromosome"/>
</dbReference>
<dbReference type="GO" id="GO:0005737">
    <property type="term" value="C:cytoplasm"/>
    <property type="evidence" value="ECO:0007669"/>
    <property type="project" value="UniProtKB-SubCell"/>
</dbReference>
<dbReference type="GO" id="GO:0003991">
    <property type="term" value="F:acetylglutamate kinase activity"/>
    <property type="evidence" value="ECO:0000318"/>
    <property type="project" value="GO_Central"/>
</dbReference>
<dbReference type="GO" id="GO:0005524">
    <property type="term" value="F:ATP binding"/>
    <property type="evidence" value="ECO:0007669"/>
    <property type="project" value="UniProtKB-UniRule"/>
</dbReference>
<dbReference type="GO" id="GO:0042450">
    <property type="term" value="P:arginine biosynthetic process via ornithine"/>
    <property type="evidence" value="ECO:0007669"/>
    <property type="project" value="UniProtKB-UniRule"/>
</dbReference>
<dbReference type="GO" id="GO:0006526">
    <property type="term" value="P:L-arginine biosynthetic process"/>
    <property type="evidence" value="ECO:0000318"/>
    <property type="project" value="GO_Central"/>
</dbReference>
<dbReference type="CDD" id="cd04250">
    <property type="entry name" value="AAK_NAGK-C"/>
    <property type="match status" value="1"/>
</dbReference>
<dbReference type="FunFam" id="3.40.1160.10:FF:000004">
    <property type="entry name" value="Acetylglutamate kinase"/>
    <property type="match status" value="1"/>
</dbReference>
<dbReference type="Gene3D" id="3.40.1160.10">
    <property type="entry name" value="Acetylglutamate kinase-like"/>
    <property type="match status" value="1"/>
</dbReference>
<dbReference type="HAMAP" id="MF_00082">
    <property type="entry name" value="ArgB"/>
    <property type="match status" value="1"/>
</dbReference>
<dbReference type="InterPro" id="IPR036393">
    <property type="entry name" value="AceGlu_kinase-like_sf"/>
</dbReference>
<dbReference type="InterPro" id="IPR004662">
    <property type="entry name" value="AcgluKinase_fam"/>
</dbReference>
<dbReference type="InterPro" id="IPR037528">
    <property type="entry name" value="ArgB"/>
</dbReference>
<dbReference type="InterPro" id="IPR001048">
    <property type="entry name" value="Asp/Glu/Uridylate_kinase"/>
</dbReference>
<dbReference type="InterPro" id="IPR041727">
    <property type="entry name" value="NAGK-C"/>
</dbReference>
<dbReference type="NCBIfam" id="TIGR00761">
    <property type="entry name" value="argB"/>
    <property type="match status" value="1"/>
</dbReference>
<dbReference type="PANTHER" id="PTHR23342">
    <property type="entry name" value="N-ACETYLGLUTAMATE SYNTHASE"/>
    <property type="match status" value="1"/>
</dbReference>
<dbReference type="PANTHER" id="PTHR23342:SF0">
    <property type="entry name" value="N-ACETYLGLUTAMATE SYNTHASE, MITOCHONDRIAL"/>
    <property type="match status" value="1"/>
</dbReference>
<dbReference type="Pfam" id="PF00696">
    <property type="entry name" value="AA_kinase"/>
    <property type="match status" value="1"/>
</dbReference>
<dbReference type="PIRSF" id="PIRSF000728">
    <property type="entry name" value="NAGK"/>
    <property type="match status" value="1"/>
</dbReference>
<dbReference type="SUPFAM" id="SSF53633">
    <property type="entry name" value="Carbamate kinase-like"/>
    <property type="match status" value="1"/>
</dbReference>
<reference key="1">
    <citation type="journal article" date="2002" name="DNA Res.">
        <title>Complete genomic sequence of nitrogen-fixing symbiotic bacterium Bradyrhizobium japonicum USDA110.</title>
        <authorList>
            <person name="Kaneko T."/>
            <person name="Nakamura Y."/>
            <person name="Sato S."/>
            <person name="Minamisawa K."/>
            <person name="Uchiumi T."/>
            <person name="Sasamoto S."/>
            <person name="Watanabe A."/>
            <person name="Idesawa K."/>
            <person name="Iriguchi M."/>
            <person name="Kawashima K."/>
            <person name="Kohara M."/>
            <person name="Matsumoto M."/>
            <person name="Shimpo S."/>
            <person name="Tsuruoka H."/>
            <person name="Wada T."/>
            <person name="Yamada M."/>
            <person name="Tabata S."/>
        </authorList>
    </citation>
    <scope>NUCLEOTIDE SEQUENCE [LARGE SCALE GENOMIC DNA]</scope>
    <source>
        <strain>JCM 10833 / BCRC 13528 / IAM 13628 / NBRC 14792 / USDA 110</strain>
    </source>
</reference>
<accession>Q89BP7</accession>